<organism>
    <name type="scientific">Mus musculus</name>
    <name type="common">Mouse</name>
    <dbReference type="NCBI Taxonomy" id="10090"/>
    <lineage>
        <taxon>Eukaryota</taxon>
        <taxon>Metazoa</taxon>
        <taxon>Chordata</taxon>
        <taxon>Craniata</taxon>
        <taxon>Vertebrata</taxon>
        <taxon>Euteleostomi</taxon>
        <taxon>Mammalia</taxon>
        <taxon>Eutheria</taxon>
        <taxon>Euarchontoglires</taxon>
        <taxon>Glires</taxon>
        <taxon>Rodentia</taxon>
        <taxon>Myomorpha</taxon>
        <taxon>Muroidea</taxon>
        <taxon>Muridae</taxon>
        <taxon>Murinae</taxon>
        <taxon>Mus</taxon>
        <taxon>Mus</taxon>
    </lineage>
</organism>
<dbReference type="EMBL" id="X53476">
    <property type="protein sequence ID" value="CAA37569.1"/>
    <property type="molecule type" value="mRNA"/>
</dbReference>
<dbReference type="EMBL" id="BC083138">
    <property type="protein sequence ID" value="AAH83138.1"/>
    <property type="molecule type" value="mRNA"/>
</dbReference>
<dbReference type="EMBL" id="BC088834">
    <property type="protein sequence ID" value="AAH88834.1"/>
    <property type="molecule type" value="mRNA"/>
</dbReference>
<dbReference type="CCDS" id="CCDS28353.1"/>
<dbReference type="PIR" id="S11219">
    <property type="entry name" value="S11219"/>
</dbReference>
<dbReference type="RefSeq" id="NP_032277.3">
    <property type="nucleotide sequence ID" value="NM_008251.3"/>
</dbReference>
<dbReference type="BioGRID" id="200332">
    <property type="interactions" value="3"/>
</dbReference>
<dbReference type="FunCoup" id="P18608">
    <property type="interactions" value="2576"/>
</dbReference>
<dbReference type="STRING" id="10090.ENSMUSP00000061012"/>
<dbReference type="iPTMnet" id="P18608"/>
<dbReference type="PhosphoSitePlus" id="P18608"/>
<dbReference type="jPOST" id="P18608"/>
<dbReference type="PaxDb" id="10090-ENSMUSP00000061012"/>
<dbReference type="PeptideAtlas" id="P18608"/>
<dbReference type="ProteomicsDB" id="273367"/>
<dbReference type="TopDownProteomics" id="P18608"/>
<dbReference type="Antibodypedia" id="23386">
    <property type="antibodies" value="394 antibodies from 36 providers"/>
</dbReference>
<dbReference type="DNASU" id="15312"/>
<dbReference type="Ensembl" id="ENSMUST00000050884.16">
    <property type="protein sequence ID" value="ENSMUSP00000061012.8"/>
    <property type="gene ID" value="ENSMUSG00000040681.17"/>
</dbReference>
<dbReference type="GeneID" id="15312"/>
<dbReference type="KEGG" id="mmu:15312"/>
<dbReference type="UCSC" id="uc008aco.1">
    <property type="organism name" value="mouse"/>
</dbReference>
<dbReference type="AGR" id="MGI:96120"/>
<dbReference type="CTD" id="3150"/>
<dbReference type="MGI" id="MGI:96120">
    <property type="gene designation" value="Hmgn1"/>
</dbReference>
<dbReference type="VEuPathDB" id="HostDB:ENSMUSG00000040681"/>
<dbReference type="eggNOG" id="ENOG502S7UM">
    <property type="taxonomic scope" value="Eukaryota"/>
</dbReference>
<dbReference type="GeneTree" id="ENSGT00950000182802"/>
<dbReference type="HOGENOM" id="CLU_141985_1_0_1"/>
<dbReference type="InParanoid" id="P18608"/>
<dbReference type="OMA" id="QAEVANH"/>
<dbReference type="OrthoDB" id="9634157at2759"/>
<dbReference type="PhylomeDB" id="P18608"/>
<dbReference type="BioGRID-ORCS" id="15312">
    <property type="hits" value="4 hits in 116 CRISPR screens"/>
</dbReference>
<dbReference type="ChiTaRS" id="Hmgn1">
    <property type="organism name" value="mouse"/>
</dbReference>
<dbReference type="PRO" id="PR:P18608"/>
<dbReference type="Proteomes" id="UP000000589">
    <property type="component" value="Chromosome 16"/>
</dbReference>
<dbReference type="RNAct" id="P18608">
    <property type="molecule type" value="protein"/>
</dbReference>
<dbReference type="Bgee" id="ENSMUSG00000040681">
    <property type="expression patterns" value="Expressed in retinal neural layer and 145 other cell types or tissues"/>
</dbReference>
<dbReference type="ExpressionAtlas" id="P18608">
    <property type="expression patterns" value="baseline and differential"/>
</dbReference>
<dbReference type="GO" id="GO:0000785">
    <property type="term" value="C:chromatin"/>
    <property type="evidence" value="ECO:0007669"/>
    <property type="project" value="InterPro"/>
</dbReference>
<dbReference type="GO" id="GO:0005737">
    <property type="term" value="C:cytoplasm"/>
    <property type="evidence" value="ECO:0007669"/>
    <property type="project" value="UniProtKB-SubCell"/>
</dbReference>
<dbReference type="GO" id="GO:0001674">
    <property type="term" value="C:female germ cell nucleus"/>
    <property type="evidence" value="ECO:0000314"/>
    <property type="project" value="MGI"/>
</dbReference>
<dbReference type="GO" id="GO:0005654">
    <property type="term" value="C:nucleoplasm"/>
    <property type="evidence" value="ECO:0007669"/>
    <property type="project" value="Ensembl"/>
</dbReference>
<dbReference type="GO" id="GO:0005634">
    <property type="term" value="C:nucleus"/>
    <property type="evidence" value="ECO:0000314"/>
    <property type="project" value="MGI"/>
</dbReference>
<dbReference type="GO" id="GO:0003682">
    <property type="term" value="F:chromatin binding"/>
    <property type="evidence" value="ECO:0000314"/>
    <property type="project" value="MGI"/>
</dbReference>
<dbReference type="GO" id="GO:0031492">
    <property type="term" value="F:nucleosomal DNA binding"/>
    <property type="evidence" value="ECO:0007669"/>
    <property type="project" value="InterPro"/>
</dbReference>
<dbReference type="GO" id="GO:0006325">
    <property type="term" value="P:chromatin organization"/>
    <property type="evidence" value="ECO:0000315"/>
    <property type="project" value="MGI"/>
</dbReference>
<dbReference type="GO" id="GO:0048597">
    <property type="term" value="P:post-embryonic camera-type eye morphogenesis"/>
    <property type="evidence" value="ECO:0000315"/>
    <property type="project" value="MGI"/>
</dbReference>
<dbReference type="GO" id="GO:0000720">
    <property type="term" value="P:pyrimidine dimer repair by nucleotide-excision repair"/>
    <property type="evidence" value="ECO:0000315"/>
    <property type="project" value="MGI"/>
</dbReference>
<dbReference type="GO" id="GO:0040034">
    <property type="term" value="P:regulation of development, heterochronic"/>
    <property type="evidence" value="ECO:0000316"/>
    <property type="project" value="MGI"/>
</dbReference>
<dbReference type="GO" id="GO:0050678">
    <property type="term" value="P:regulation of epithelial cell proliferation"/>
    <property type="evidence" value="ECO:0000315"/>
    <property type="project" value="MGI"/>
</dbReference>
<dbReference type="GO" id="GO:0006357">
    <property type="term" value="P:regulation of transcription by RNA polymerase II"/>
    <property type="evidence" value="ECO:0000315"/>
    <property type="project" value="MGI"/>
</dbReference>
<dbReference type="GO" id="GO:0010224">
    <property type="term" value="P:response to UV-B"/>
    <property type="evidence" value="ECO:0000315"/>
    <property type="project" value="MGI"/>
</dbReference>
<dbReference type="GO" id="GO:0010225">
    <property type="term" value="P:response to UV-C"/>
    <property type="evidence" value="ECO:0000314"/>
    <property type="project" value="MGI"/>
</dbReference>
<dbReference type="GO" id="GO:0006283">
    <property type="term" value="P:transcription-coupled nucleotide-excision repair"/>
    <property type="evidence" value="ECO:0000315"/>
    <property type="project" value="MGI"/>
</dbReference>
<dbReference type="InterPro" id="IPR000079">
    <property type="entry name" value="HMGN_fam"/>
</dbReference>
<dbReference type="PANTHER" id="PTHR23087:SF12">
    <property type="entry name" value="NON-HISTONE CHROMOSOMAL PROTEIN HMG-14"/>
    <property type="match status" value="1"/>
</dbReference>
<dbReference type="PANTHER" id="PTHR23087">
    <property type="entry name" value="NONHISTONE CHROMOSOMAL PROTEIN HMG"/>
    <property type="match status" value="1"/>
</dbReference>
<dbReference type="Pfam" id="PF01101">
    <property type="entry name" value="HMG14_17"/>
    <property type="match status" value="1"/>
</dbReference>
<dbReference type="PRINTS" id="PR00925">
    <property type="entry name" value="NONHISHMG17"/>
</dbReference>
<dbReference type="SMART" id="SM00527">
    <property type="entry name" value="HMG17"/>
    <property type="match status" value="1"/>
</dbReference>
<dbReference type="PROSITE" id="PS00355">
    <property type="entry name" value="HMG14_17"/>
    <property type="match status" value="1"/>
</dbReference>
<name>HMGN1_MOUSE</name>
<keyword id="KW-0007">Acetylation</keyword>
<keyword id="KW-0013">ADP-ribosylation</keyword>
<keyword id="KW-0963">Cytoplasm</keyword>
<keyword id="KW-0903">Direct protein sequencing</keyword>
<keyword id="KW-0238">DNA-binding</keyword>
<keyword id="KW-0539">Nucleus</keyword>
<keyword id="KW-0597">Phosphoprotein</keyword>
<keyword id="KW-1185">Reference proteome</keyword>
<reference key="1">
    <citation type="journal article" date="1990" name="Nucleic Acids Res.">
        <title>Mouse non-histone chromosomal protein HMG-14 cDNA sequence.</title>
        <authorList>
            <person name="Landsman D."/>
            <person name="Bustin M."/>
        </authorList>
    </citation>
    <scope>NUCLEOTIDE SEQUENCE [MRNA]</scope>
    <source>
        <tissue>Liver</tissue>
    </source>
</reference>
<reference key="2">
    <citation type="journal article" date="2004" name="Genome Res.">
        <title>The status, quality, and expansion of the NIH full-length cDNA project: the Mammalian Gene Collection (MGC).</title>
        <authorList>
            <consortium name="The MGC Project Team"/>
        </authorList>
    </citation>
    <scope>NUCLEOTIDE SEQUENCE [LARGE SCALE MRNA]</scope>
    <source>
        <tissue>Eye</tissue>
        <tissue>Limb</tissue>
    </source>
</reference>
<reference key="3">
    <citation type="journal article" date="1988" name="FEBS Lett.">
        <title>Selective decrease in low-Mr HMG proteins HMG I and HMG Y during differentiation of mouse teratocarcinoma cells.</title>
        <authorList>
            <person name="Vartiainen E."/>
            <person name="Palvimo J."/>
            <person name="Mahonen A."/>
            <person name="Linnala-Kankkunen A."/>
            <person name="Maeenpaeae P.H."/>
        </authorList>
    </citation>
    <scope>PROTEIN SEQUENCE OF 2-19</scope>
</reference>
<reference key="4">
    <citation type="journal article" date="1994" name="EMBO J.">
        <title>A mitogen- and anisomycin-stimulated kinase phosphorylates HMG-14 in its basic amino-terminal domain in vivo and on isolated mononucleosomes.</title>
        <authorList>
            <person name="Barratt M.J."/>
            <person name="Hazzalin C.A."/>
            <person name="Zhelev N."/>
            <person name="Mahadevan L.C."/>
        </authorList>
    </citation>
    <scope>PHOSPHORYLATION AT SER-7</scope>
</reference>
<reference key="5">
    <citation type="journal article" date="2004" name="Mol. Cell">
        <title>Chromosomal protein HMGN1 modulates histone H3 phosphorylation.</title>
        <authorList>
            <person name="Lim J.-H."/>
            <person name="Catez F."/>
            <person name="Birger Y."/>
            <person name="West K.L."/>
            <person name="Prymakowska-Bosak M."/>
            <person name="Postnikov Y.V."/>
            <person name="Bustin M."/>
        </authorList>
    </citation>
    <scope>FUNCTION</scope>
    <scope>PHOSPHORYLATION AT SER-7; SER-20 AND SER-24</scope>
</reference>
<reference key="6">
    <citation type="journal article" date="2007" name="Proc. Natl. Acad. Sci. U.S.A.">
        <title>Large-scale phosphorylation analysis of mouse liver.</title>
        <authorList>
            <person name="Villen J."/>
            <person name="Beausoleil S.A."/>
            <person name="Gerber S.A."/>
            <person name="Gygi S.P."/>
        </authorList>
    </citation>
    <scope>PHOSPHORYLATION [LARGE SCALE ANALYSIS] AT SER-84; SER-87 AND SER-95</scope>
    <scope>IDENTIFICATION BY MASS SPECTROMETRY [LARGE SCALE ANALYSIS]</scope>
    <source>
        <tissue>Liver</tissue>
    </source>
</reference>
<reference key="7">
    <citation type="journal article" date="2009" name="Mol. Cell. Proteomics">
        <title>Large scale localization of protein phosphorylation by use of electron capture dissociation mass spectrometry.</title>
        <authorList>
            <person name="Sweet S.M."/>
            <person name="Bailey C.M."/>
            <person name="Cunningham D.L."/>
            <person name="Heath J.K."/>
            <person name="Cooper H.J."/>
        </authorList>
    </citation>
    <scope>IDENTIFICATION BY MASS SPECTROMETRY [LARGE SCALE ANALYSIS]</scope>
    <source>
        <tissue>Embryonic fibroblast</tissue>
    </source>
</reference>
<reference key="8">
    <citation type="journal article" date="2010" name="Cell">
        <title>A tissue-specific atlas of mouse protein phosphorylation and expression.</title>
        <authorList>
            <person name="Huttlin E.L."/>
            <person name="Jedrychowski M.P."/>
            <person name="Elias J.E."/>
            <person name="Goswami T."/>
            <person name="Rad R."/>
            <person name="Beausoleil S.A."/>
            <person name="Villen J."/>
            <person name="Haas W."/>
            <person name="Sowa M.E."/>
            <person name="Gygi S.P."/>
        </authorList>
    </citation>
    <scope>PHOSPHORYLATION [LARGE SCALE ANALYSIS] AT THR-80; SER-84; SER-87 AND SER-95</scope>
    <scope>IDENTIFICATION BY MASS SPECTROMETRY [LARGE SCALE ANALYSIS]</scope>
    <source>
        <tissue>Brain</tissue>
        <tissue>Brown adipose tissue</tissue>
        <tissue>Heart</tissue>
        <tissue>Kidney</tissue>
        <tissue>Liver</tissue>
        <tissue>Lung</tissue>
        <tissue>Pancreas</tissue>
        <tissue>Spleen</tissue>
        <tissue>Testis</tissue>
    </source>
</reference>
<reference key="9">
    <citation type="journal article" date="2013" name="Mol. Cell">
        <title>SIRT5-mediated lysine desuccinylation impacts diverse metabolic pathways.</title>
        <authorList>
            <person name="Park J."/>
            <person name="Chen Y."/>
            <person name="Tishkoff D.X."/>
            <person name="Peng C."/>
            <person name="Tan M."/>
            <person name="Dai L."/>
            <person name="Xie Z."/>
            <person name="Zhang Y."/>
            <person name="Zwaans B.M."/>
            <person name="Skinner M.E."/>
            <person name="Lombard D.B."/>
            <person name="Zhao Y."/>
        </authorList>
    </citation>
    <scope>ACETYLATION [LARGE SCALE ANALYSIS] AT LYS-13 AND LYS-26</scope>
    <scope>IDENTIFICATION BY MASS SPECTROMETRY [LARGE SCALE ANALYSIS]</scope>
    <source>
        <tissue>Embryonic fibroblast</tissue>
    </source>
</reference>
<evidence type="ECO:0000250" key="1"/>
<evidence type="ECO:0000250" key="2">
    <source>
        <dbReference type="UniProtKB" id="P05114"/>
    </source>
</evidence>
<evidence type="ECO:0000256" key="3">
    <source>
        <dbReference type="SAM" id="MobiDB-lite"/>
    </source>
</evidence>
<evidence type="ECO:0000269" key="4">
    <source>
    </source>
</evidence>
<evidence type="ECO:0000269" key="5">
    <source>
    </source>
</evidence>
<evidence type="ECO:0000269" key="6">
    <source>
    </source>
</evidence>
<evidence type="ECO:0000305" key="7"/>
<evidence type="ECO:0007744" key="8">
    <source>
    </source>
</evidence>
<evidence type="ECO:0007744" key="9">
    <source>
    </source>
</evidence>
<evidence type="ECO:0007744" key="10">
    <source>
    </source>
</evidence>
<accession>P18608</accession>
<accession>Q5HZY9</accession>
<proteinExistence type="evidence at protein level"/>
<feature type="initiator methionine" description="Removed" evidence="5">
    <location>
        <position position="1"/>
    </location>
</feature>
<feature type="chain" id="PRO_0000206692" description="Non-histone chromosomal protein HMG-14">
    <location>
        <begin position="2"/>
        <end position="96"/>
    </location>
</feature>
<feature type="region of interest" description="Disordered" evidence="3">
    <location>
        <begin position="1"/>
        <end position="96"/>
    </location>
</feature>
<feature type="compositionally biased region" description="Basic and acidic residues" evidence="3">
    <location>
        <begin position="32"/>
        <end position="50"/>
    </location>
</feature>
<feature type="modified residue" description="Phosphoserine; by RPS6KA5" evidence="4 6">
    <location>
        <position position="7"/>
    </location>
</feature>
<feature type="modified residue" description="N6-acetyllysine" evidence="10">
    <location>
        <position position="13"/>
    </location>
</feature>
<feature type="modified residue" description="Phosphoserine; by RPS6KA5" evidence="4">
    <location>
        <position position="20"/>
    </location>
</feature>
<feature type="modified residue" description="ADP-ribosylserine; alternate" evidence="2">
    <location>
        <position position="24"/>
    </location>
</feature>
<feature type="modified residue" description="Phosphoserine; alternate; by RPS6KA5" evidence="4">
    <location>
        <position position="24"/>
    </location>
</feature>
<feature type="modified residue" description="N6-acetyllysine" evidence="10">
    <location>
        <position position="26"/>
    </location>
</feature>
<feature type="modified residue" description="Phosphothreonine" evidence="9">
    <location>
        <position position="80"/>
    </location>
</feature>
<feature type="modified residue" description="Phosphoserine" evidence="8 9">
    <location>
        <position position="84"/>
    </location>
</feature>
<feature type="modified residue" description="Phosphoserine" evidence="8 9">
    <location>
        <position position="87"/>
    </location>
</feature>
<feature type="modified residue" description="Phosphoserine" evidence="8 9">
    <location>
        <position position="95"/>
    </location>
</feature>
<gene>
    <name type="primary">Hmgn1</name>
    <name type="synonym">Hmg-14</name>
    <name type="synonym">Hmg14</name>
</gene>
<protein>
    <recommendedName>
        <fullName>Non-histone chromosomal protein HMG-14</fullName>
    </recommendedName>
    <alternativeName>
        <fullName>High mobility group nucleosome-binding domain-containing protein 1</fullName>
    </alternativeName>
</protein>
<sequence length="96" mass="10152">MPKRKVSADGAAKAEPKRRSARLSAKPAPAKVDAKPKKAAGKDKASDKKVQIKGKRGAKGKQADVADQQTTELPAENGETENQSPASEEEKEAKSD</sequence>
<comment type="function">
    <text evidence="4">Binds to the inner side of the nucleosomal DNA thus altering the interaction between the DNA and the histone octamer. May be involved in the process which maintains transcribable genes in a unique chromatin conformation. Inhibits the phosphorylation of nucleosomal histones H3 and H2A by RPS6KA5/MSK1 and RPS6KA3/RSK2.</text>
</comment>
<comment type="subunit">
    <text evidence="2">Interacts with transcriptional regulator SEHBP.</text>
</comment>
<comment type="subcellular location">
    <subcellularLocation>
        <location>Nucleus</location>
    </subcellularLocation>
    <subcellularLocation>
        <location evidence="1">Cytoplasm</location>
    </subcellularLocation>
    <text evidence="1">Cytoplasmic enrichment upon phosphorylation.</text>
</comment>
<comment type="PTM">
    <text evidence="1 4 6">Phosphorylation favors cytoplasmic localization (By similarity). Phosphorylation on Ser-20 and Ser-24 weakens binding to nucleosomes and increases the rate of H3 phosphorylation.</text>
</comment>
<comment type="similarity">
    <text evidence="7">Belongs to the HMGN family.</text>
</comment>